<name>TRMY_HALLT</name>
<accession>B9LP86</accession>
<evidence type="ECO:0000255" key="1">
    <source>
        <dbReference type="HAMAP-Rule" id="MF_00587"/>
    </source>
</evidence>
<proteinExistence type="inferred from homology"/>
<sequence>MRQFVVIGHDVPTDPDAISLSDIPGAGRLDLLCRCVAAGVFLSHGIRERVRVHLVVADEFTVTFDADSLRHLHPDERNVAARIRDALDAQDDAIGHMPADVSPGVELRRMGLEATLDRVLDTPGTSSASADPTLVQLHEDGDPLVDAAPPTDPVFVLSDHNDFAPAERDLLADRAERRVRVGPELLHADHTVSVVHNWLDTDGYESY</sequence>
<gene>
    <name evidence="1" type="primary">trmY</name>
    <name type="ordered locus">Hlac_1588</name>
</gene>
<reference key="1">
    <citation type="journal article" date="2016" name="Stand. Genomic Sci.">
        <title>Complete genome sequence of the Antarctic Halorubrum lacusprofundi type strain ACAM 34.</title>
        <authorList>
            <person name="Anderson I.J."/>
            <person name="DasSarma P."/>
            <person name="Lucas S."/>
            <person name="Copeland A."/>
            <person name="Lapidus A."/>
            <person name="Del Rio T.G."/>
            <person name="Tice H."/>
            <person name="Dalin E."/>
            <person name="Bruce D.C."/>
            <person name="Goodwin L."/>
            <person name="Pitluck S."/>
            <person name="Sims D."/>
            <person name="Brettin T.S."/>
            <person name="Detter J.C."/>
            <person name="Han C.S."/>
            <person name="Larimer F."/>
            <person name="Hauser L."/>
            <person name="Land M."/>
            <person name="Ivanova N."/>
            <person name="Richardson P."/>
            <person name="Cavicchioli R."/>
            <person name="DasSarma S."/>
            <person name="Woese C.R."/>
            <person name="Kyrpides N.C."/>
        </authorList>
    </citation>
    <scope>NUCLEOTIDE SEQUENCE [LARGE SCALE GENOMIC DNA]</scope>
    <source>
        <strain>ATCC 49239 / DSM 5036 / JCM 8891 / ACAM 34</strain>
    </source>
</reference>
<dbReference type="EC" id="2.1.1.257" evidence="1"/>
<dbReference type="EMBL" id="CP001365">
    <property type="protein sequence ID" value="ACM57174.1"/>
    <property type="molecule type" value="Genomic_DNA"/>
</dbReference>
<dbReference type="RefSeq" id="WP_015910314.1">
    <property type="nucleotide sequence ID" value="NC_012029.1"/>
</dbReference>
<dbReference type="SMR" id="B9LP86"/>
<dbReference type="GeneID" id="7399536"/>
<dbReference type="KEGG" id="hla:Hlac_1588"/>
<dbReference type="eggNOG" id="arCOG01239">
    <property type="taxonomic scope" value="Archaea"/>
</dbReference>
<dbReference type="HOGENOM" id="CLU_107018_0_0_2"/>
<dbReference type="Proteomes" id="UP000000740">
    <property type="component" value="Chromosome 1"/>
</dbReference>
<dbReference type="GO" id="GO:0005737">
    <property type="term" value="C:cytoplasm"/>
    <property type="evidence" value="ECO:0007669"/>
    <property type="project" value="UniProtKB-SubCell"/>
</dbReference>
<dbReference type="GO" id="GO:0008757">
    <property type="term" value="F:S-adenosylmethionine-dependent methyltransferase activity"/>
    <property type="evidence" value="ECO:0007669"/>
    <property type="project" value="UniProtKB-UniRule"/>
</dbReference>
<dbReference type="GO" id="GO:0008175">
    <property type="term" value="F:tRNA methyltransferase activity"/>
    <property type="evidence" value="ECO:0007669"/>
    <property type="project" value="UniProtKB-UniRule"/>
</dbReference>
<dbReference type="GO" id="GO:0030488">
    <property type="term" value="P:tRNA methylation"/>
    <property type="evidence" value="ECO:0007669"/>
    <property type="project" value="UniProtKB-UniRule"/>
</dbReference>
<dbReference type="CDD" id="cd18087">
    <property type="entry name" value="TrmY-like"/>
    <property type="match status" value="1"/>
</dbReference>
<dbReference type="Gene3D" id="3.40.1280.10">
    <property type="match status" value="1"/>
</dbReference>
<dbReference type="HAMAP" id="MF_00587">
    <property type="entry name" value="tRNA_methyltr_TrmY"/>
    <property type="match status" value="1"/>
</dbReference>
<dbReference type="InterPro" id="IPR029028">
    <property type="entry name" value="Alpha/beta_knot_MTases"/>
</dbReference>
<dbReference type="InterPro" id="IPR007158">
    <property type="entry name" value="TrmY"/>
</dbReference>
<dbReference type="InterPro" id="IPR029026">
    <property type="entry name" value="tRNA_m1G_MTases_N"/>
</dbReference>
<dbReference type="NCBIfam" id="NF002560">
    <property type="entry name" value="PRK02135.1"/>
    <property type="match status" value="1"/>
</dbReference>
<dbReference type="PANTHER" id="PTHR40703">
    <property type="entry name" value="TRNA (PSEUDOURIDINE(54)-N(1))-METHYLTRANSFERASE"/>
    <property type="match status" value="1"/>
</dbReference>
<dbReference type="PANTHER" id="PTHR40703:SF1">
    <property type="entry name" value="TRNA (PSEUDOURIDINE(54)-N(1))-METHYLTRANSFERASE"/>
    <property type="match status" value="1"/>
</dbReference>
<dbReference type="Pfam" id="PF04013">
    <property type="entry name" value="Methyltrn_RNA_2"/>
    <property type="match status" value="1"/>
</dbReference>
<dbReference type="SUPFAM" id="SSF75217">
    <property type="entry name" value="alpha/beta knot"/>
    <property type="match status" value="1"/>
</dbReference>
<keyword id="KW-0963">Cytoplasm</keyword>
<keyword id="KW-0489">Methyltransferase</keyword>
<keyword id="KW-1185">Reference proteome</keyword>
<keyword id="KW-0949">S-adenosyl-L-methionine</keyword>
<keyword id="KW-0808">Transferase</keyword>
<keyword id="KW-0819">tRNA processing</keyword>
<organism>
    <name type="scientific">Halorubrum lacusprofundi (strain ATCC 49239 / DSM 5036 / JCM 8891 / ACAM 34)</name>
    <dbReference type="NCBI Taxonomy" id="416348"/>
    <lineage>
        <taxon>Archaea</taxon>
        <taxon>Methanobacteriati</taxon>
        <taxon>Methanobacteriota</taxon>
        <taxon>Stenosarchaea group</taxon>
        <taxon>Halobacteria</taxon>
        <taxon>Halobacteriales</taxon>
        <taxon>Haloferacaceae</taxon>
        <taxon>Halorubrum</taxon>
    </lineage>
</organism>
<comment type="function">
    <text evidence="1">Specifically catalyzes the N1-methylation of pseudouridine at position 54 (Psi54) in tRNAs.</text>
</comment>
<comment type="catalytic activity">
    <reaction evidence="1">
        <text>pseudouridine(54) in tRNA + S-adenosyl-L-methionine = N(1)-methylpseudouridine(54) in tRNA + S-adenosyl-L-homocysteine + H(+)</text>
        <dbReference type="Rhea" id="RHEA:55292"/>
        <dbReference type="Rhea" id="RHEA-COMP:14140"/>
        <dbReference type="Rhea" id="RHEA-COMP:14141"/>
        <dbReference type="ChEBI" id="CHEBI:15378"/>
        <dbReference type="ChEBI" id="CHEBI:57856"/>
        <dbReference type="ChEBI" id="CHEBI:59789"/>
        <dbReference type="ChEBI" id="CHEBI:65314"/>
        <dbReference type="ChEBI" id="CHEBI:74890"/>
        <dbReference type="EC" id="2.1.1.257"/>
    </reaction>
</comment>
<comment type="subunit">
    <text evidence="1">Homodimer.</text>
</comment>
<comment type="subcellular location">
    <subcellularLocation>
        <location evidence="1">Cytoplasm</location>
    </subcellularLocation>
</comment>
<comment type="similarity">
    <text evidence="1">Belongs to the methyltransferase superfamily. TrmY family.</text>
</comment>
<protein>
    <recommendedName>
        <fullName evidence="1">tRNA (pseudouridine(54)-N(1))-methyltransferase</fullName>
        <ecNumber evidence="1">2.1.1.257</ecNumber>
    </recommendedName>
</protein>
<feature type="chain" id="PRO_1000197959" description="tRNA (pseudouridine(54)-N(1))-methyltransferase">
    <location>
        <begin position="1"/>
        <end position="207"/>
    </location>
</feature>
<feature type="binding site" evidence="1">
    <location>
        <position position="137"/>
    </location>
    <ligand>
        <name>S-adenosyl-L-methionine</name>
        <dbReference type="ChEBI" id="CHEBI:59789"/>
    </ligand>
</feature>